<accession>B1KRD7</accession>
<protein>
    <recommendedName>
        <fullName evidence="1">Pyridoxine/pyridoxamine 5'-phosphate oxidase</fullName>
        <ecNumber evidence="1">1.4.3.5</ecNumber>
    </recommendedName>
    <alternativeName>
        <fullName evidence="1">PNP/PMP oxidase</fullName>
        <shortName evidence="1">PNPOx</shortName>
    </alternativeName>
    <alternativeName>
        <fullName evidence="1">Pyridoxal 5'-phosphate synthase</fullName>
    </alternativeName>
</protein>
<comment type="function">
    <text evidence="1">Catalyzes the oxidation of either pyridoxine 5'-phosphate (PNP) or pyridoxamine 5'-phosphate (PMP) into pyridoxal 5'-phosphate (PLP).</text>
</comment>
<comment type="catalytic activity">
    <reaction evidence="1">
        <text>pyridoxamine 5'-phosphate + O2 + H2O = pyridoxal 5'-phosphate + H2O2 + NH4(+)</text>
        <dbReference type="Rhea" id="RHEA:15817"/>
        <dbReference type="ChEBI" id="CHEBI:15377"/>
        <dbReference type="ChEBI" id="CHEBI:15379"/>
        <dbReference type="ChEBI" id="CHEBI:16240"/>
        <dbReference type="ChEBI" id="CHEBI:28938"/>
        <dbReference type="ChEBI" id="CHEBI:58451"/>
        <dbReference type="ChEBI" id="CHEBI:597326"/>
        <dbReference type="EC" id="1.4.3.5"/>
    </reaction>
</comment>
<comment type="catalytic activity">
    <reaction evidence="1">
        <text>pyridoxine 5'-phosphate + O2 = pyridoxal 5'-phosphate + H2O2</text>
        <dbReference type="Rhea" id="RHEA:15149"/>
        <dbReference type="ChEBI" id="CHEBI:15379"/>
        <dbReference type="ChEBI" id="CHEBI:16240"/>
        <dbReference type="ChEBI" id="CHEBI:58589"/>
        <dbReference type="ChEBI" id="CHEBI:597326"/>
        <dbReference type="EC" id="1.4.3.5"/>
    </reaction>
</comment>
<comment type="cofactor">
    <cofactor evidence="1">
        <name>FMN</name>
        <dbReference type="ChEBI" id="CHEBI:58210"/>
    </cofactor>
    <text evidence="1">Binds 1 FMN per subunit.</text>
</comment>
<comment type="pathway">
    <text evidence="1">Cofactor metabolism; pyridoxal 5'-phosphate salvage; pyridoxal 5'-phosphate from pyridoxamine 5'-phosphate: step 1/1.</text>
</comment>
<comment type="pathway">
    <text evidence="1">Cofactor metabolism; pyridoxal 5'-phosphate salvage; pyridoxal 5'-phosphate from pyridoxine 5'-phosphate: step 1/1.</text>
</comment>
<comment type="subunit">
    <text evidence="1">Homodimer.</text>
</comment>
<comment type="similarity">
    <text evidence="1">Belongs to the pyridoxamine 5'-phosphate oxidase family.</text>
</comment>
<organism>
    <name type="scientific">Shewanella woodyi (strain ATCC 51908 / MS32)</name>
    <dbReference type="NCBI Taxonomy" id="392500"/>
    <lineage>
        <taxon>Bacteria</taxon>
        <taxon>Pseudomonadati</taxon>
        <taxon>Pseudomonadota</taxon>
        <taxon>Gammaproteobacteria</taxon>
        <taxon>Alteromonadales</taxon>
        <taxon>Shewanellaceae</taxon>
        <taxon>Shewanella</taxon>
    </lineage>
</organism>
<sequence length="213" mass="24397">MSKLSDIRREYSLGDLHRDALPDEPMSLFSKWMEEARDSELLSDPTAMSIATVDESGQPFQRIVLLKRFSEEGFVFFTNLESRKSQQIAHNAKVSLLFPWHSLERQVAITGEAEALSTADVMKYFITRPKESQIAAWVSQQSSKISARQVLETKYAEMKAKFSKGEVPLPKFWGGYLVKPSSIEFWQGGERRLHDRFLYDKGQSGWDISRLAP</sequence>
<dbReference type="EC" id="1.4.3.5" evidence="1"/>
<dbReference type="EMBL" id="CP000961">
    <property type="protein sequence ID" value="ACA86344.1"/>
    <property type="molecule type" value="Genomic_DNA"/>
</dbReference>
<dbReference type="RefSeq" id="WP_012324689.1">
    <property type="nucleotide sequence ID" value="NC_010506.1"/>
</dbReference>
<dbReference type="SMR" id="B1KRD7"/>
<dbReference type="STRING" id="392500.Swoo_2060"/>
<dbReference type="KEGG" id="swd:Swoo_2060"/>
<dbReference type="eggNOG" id="COG0259">
    <property type="taxonomic scope" value="Bacteria"/>
</dbReference>
<dbReference type="HOGENOM" id="CLU_032263_2_3_6"/>
<dbReference type="UniPathway" id="UPA01068">
    <property type="reaction ID" value="UER00304"/>
</dbReference>
<dbReference type="UniPathway" id="UPA01068">
    <property type="reaction ID" value="UER00305"/>
</dbReference>
<dbReference type="Proteomes" id="UP000002168">
    <property type="component" value="Chromosome"/>
</dbReference>
<dbReference type="GO" id="GO:0010181">
    <property type="term" value="F:FMN binding"/>
    <property type="evidence" value="ECO:0007669"/>
    <property type="project" value="UniProtKB-UniRule"/>
</dbReference>
<dbReference type="GO" id="GO:0004733">
    <property type="term" value="F:pyridoxamine phosphate oxidase activity"/>
    <property type="evidence" value="ECO:0007669"/>
    <property type="project" value="UniProtKB-UniRule"/>
</dbReference>
<dbReference type="GO" id="GO:0008615">
    <property type="term" value="P:pyridoxine biosynthetic process"/>
    <property type="evidence" value="ECO:0007669"/>
    <property type="project" value="UniProtKB-KW"/>
</dbReference>
<dbReference type="Gene3D" id="2.30.110.10">
    <property type="entry name" value="Electron Transport, Fmn-binding Protein, Chain A"/>
    <property type="match status" value="1"/>
</dbReference>
<dbReference type="HAMAP" id="MF_01629">
    <property type="entry name" value="PdxH"/>
    <property type="match status" value="1"/>
</dbReference>
<dbReference type="InterPro" id="IPR000659">
    <property type="entry name" value="Pyridox_Oxase"/>
</dbReference>
<dbReference type="InterPro" id="IPR019740">
    <property type="entry name" value="Pyridox_Oxase_CS"/>
</dbReference>
<dbReference type="InterPro" id="IPR011576">
    <property type="entry name" value="Pyridox_Oxase_N"/>
</dbReference>
<dbReference type="InterPro" id="IPR019576">
    <property type="entry name" value="Pyridoxamine_oxidase_dimer_C"/>
</dbReference>
<dbReference type="InterPro" id="IPR012349">
    <property type="entry name" value="Split_barrel_FMN-bd"/>
</dbReference>
<dbReference type="NCBIfam" id="TIGR00558">
    <property type="entry name" value="pdxH"/>
    <property type="match status" value="1"/>
</dbReference>
<dbReference type="NCBIfam" id="NF004231">
    <property type="entry name" value="PRK05679.1"/>
    <property type="match status" value="1"/>
</dbReference>
<dbReference type="PANTHER" id="PTHR10851:SF0">
    <property type="entry name" value="PYRIDOXINE-5'-PHOSPHATE OXIDASE"/>
    <property type="match status" value="1"/>
</dbReference>
<dbReference type="PANTHER" id="PTHR10851">
    <property type="entry name" value="PYRIDOXINE-5-PHOSPHATE OXIDASE"/>
    <property type="match status" value="1"/>
</dbReference>
<dbReference type="Pfam" id="PF10590">
    <property type="entry name" value="PNP_phzG_C"/>
    <property type="match status" value="1"/>
</dbReference>
<dbReference type="Pfam" id="PF01243">
    <property type="entry name" value="PNPOx_N"/>
    <property type="match status" value="1"/>
</dbReference>
<dbReference type="PIRSF" id="PIRSF000190">
    <property type="entry name" value="Pyd_amn-ph_oxd"/>
    <property type="match status" value="1"/>
</dbReference>
<dbReference type="SUPFAM" id="SSF50475">
    <property type="entry name" value="FMN-binding split barrel"/>
    <property type="match status" value="1"/>
</dbReference>
<dbReference type="PROSITE" id="PS01064">
    <property type="entry name" value="PYRIDOX_OXIDASE"/>
    <property type="match status" value="1"/>
</dbReference>
<feature type="chain" id="PRO_1000186342" description="Pyridoxine/pyridoxamine 5'-phosphate oxidase">
    <location>
        <begin position="1"/>
        <end position="213"/>
    </location>
</feature>
<feature type="binding site" evidence="1">
    <location>
        <begin position="8"/>
        <end position="11"/>
    </location>
    <ligand>
        <name>substrate</name>
    </ligand>
</feature>
<feature type="binding site" evidence="1">
    <location>
        <begin position="62"/>
        <end position="67"/>
    </location>
    <ligand>
        <name>FMN</name>
        <dbReference type="ChEBI" id="CHEBI:58210"/>
    </ligand>
</feature>
<feature type="binding site" evidence="1">
    <location>
        <position position="67"/>
    </location>
    <ligand>
        <name>substrate</name>
    </ligand>
</feature>
<feature type="binding site" evidence="1">
    <location>
        <begin position="77"/>
        <end position="78"/>
    </location>
    <ligand>
        <name>FMN</name>
        <dbReference type="ChEBI" id="CHEBI:58210"/>
    </ligand>
</feature>
<feature type="binding site" evidence="1">
    <location>
        <position position="83"/>
    </location>
    <ligand>
        <name>FMN</name>
        <dbReference type="ChEBI" id="CHEBI:58210"/>
    </ligand>
</feature>
<feature type="binding site" evidence="1">
    <location>
        <position position="84"/>
    </location>
    <ligand>
        <name>FMN</name>
        <dbReference type="ChEBI" id="CHEBI:58210"/>
    </ligand>
</feature>
<feature type="binding site" evidence="1">
    <location>
        <position position="106"/>
    </location>
    <ligand>
        <name>FMN</name>
        <dbReference type="ChEBI" id="CHEBI:58210"/>
    </ligand>
</feature>
<feature type="binding site" evidence="1">
    <location>
        <position position="124"/>
    </location>
    <ligand>
        <name>substrate</name>
    </ligand>
</feature>
<feature type="binding site" evidence="1">
    <location>
        <position position="128"/>
    </location>
    <ligand>
        <name>substrate</name>
    </ligand>
</feature>
<feature type="binding site" evidence="1">
    <location>
        <position position="132"/>
    </location>
    <ligand>
        <name>substrate</name>
    </ligand>
</feature>
<feature type="binding site" evidence="1">
    <location>
        <begin position="141"/>
        <end position="142"/>
    </location>
    <ligand>
        <name>FMN</name>
        <dbReference type="ChEBI" id="CHEBI:58210"/>
    </ligand>
</feature>
<feature type="binding site" evidence="1">
    <location>
        <position position="186"/>
    </location>
    <ligand>
        <name>FMN</name>
        <dbReference type="ChEBI" id="CHEBI:58210"/>
    </ligand>
</feature>
<feature type="binding site" evidence="1">
    <location>
        <begin position="192"/>
        <end position="194"/>
    </location>
    <ligand>
        <name>substrate</name>
    </ligand>
</feature>
<feature type="binding site" evidence="1">
    <location>
        <position position="196"/>
    </location>
    <ligand>
        <name>FMN</name>
        <dbReference type="ChEBI" id="CHEBI:58210"/>
    </ligand>
</feature>
<keyword id="KW-0285">Flavoprotein</keyword>
<keyword id="KW-0288">FMN</keyword>
<keyword id="KW-0560">Oxidoreductase</keyword>
<keyword id="KW-0664">Pyridoxine biosynthesis</keyword>
<keyword id="KW-1185">Reference proteome</keyword>
<gene>
    <name evidence="1" type="primary">pdxH</name>
    <name type="ordered locus">Swoo_2060</name>
</gene>
<proteinExistence type="inferred from homology"/>
<reference key="1">
    <citation type="submission" date="2008-02" db="EMBL/GenBank/DDBJ databases">
        <title>Complete sequence of Shewanella woodyi ATCC 51908.</title>
        <authorList>
            <consortium name="US DOE Joint Genome Institute"/>
            <person name="Copeland A."/>
            <person name="Lucas S."/>
            <person name="Lapidus A."/>
            <person name="Glavina del Rio T."/>
            <person name="Dalin E."/>
            <person name="Tice H."/>
            <person name="Bruce D."/>
            <person name="Goodwin L."/>
            <person name="Pitluck S."/>
            <person name="Sims D."/>
            <person name="Brettin T."/>
            <person name="Detter J.C."/>
            <person name="Han C."/>
            <person name="Kuske C.R."/>
            <person name="Schmutz J."/>
            <person name="Larimer F."/>
            <person name="Land M."/>
            <person name="Hauser L."/>
            <person name="Kyrpides N."/>
            <person name="Lykidis A."/>
            <person name="Zhao J.-S."/>
            <person name="Richardson P."/>
        </authorList>
    </citation>
    <scope>NUCLEOTIDE SEQUENCE [LARGE SCALE GENOMIC DNA]</scope>
    <source>
        <strain>ATCC 51908 / MS32</strain>
    </source>
</reference>
<evidence type="ECO:0000255" key="1">
    <source>
        <dbReference type="HAMAP-Rule" id="MF_01629"/>
    </source>
</evidence>
<name>PDXH_SHEWM</name>